<evidence type="ECO:0000255" key="1">
    <source>
        <dbReference type="HAMAP-Rule" id="MF_01202"/>
    </source>
</evidence>
<keyword id="KW-0274">FAD</keyword>
<keyword id="KW-0285">Flavoprotein</keyword>
<keyword id="KW-0560">Oxidoreductase</keyword>
<dbReference type="EC" id="1.4.99.-" evidence="1"/>
<dbReference type="EMBL" id="CP001113">
    <property type="protein sequence ID" value="ACF64556.1"/>
    <property type="molecule type" value="Genomic_DNA"/>
</dbReference>
<dbReference type="RefSeq" id="WP_001266937.1">
    <property type="nucleotide sequence ID" value="NZ_CCMR01000003.1"/>
</dbReference>
<dbReference type="SMR" id="B4SUJ5"/>
<dbReference type="KEGG" id="see:SNSL254_A1941"/>
<dbReference type="HOGENOM" id="CLU_007884_9_2_6"/>
<dbReference type="UniPathway" id="UPA00043">
    <property type="reaction ID" value="UER00498"/>
</dbReference>
<dbReference type="Proteomes" id="UP000008824">
    <property type="component" value="Chromosome"/>
</dbReference>
<dbReference type="GO" id="GO:0005737">
    <property type="term" value="C:cytoplasm"/>
    <property type="evidence" value="ECO:0007669"/>
    <property type="project" value="TreeGrafter"/>
</dbReference>
<dbReference type="GO" id="GO:0005886">
    <property type="term" value="C:plasma membrane"/>
    <property type="evidence" value="ECO:0007669"/>
    <property type="project" value="TreeGrafter"/>
</dbReference>
<dbReference type="GO" id="GO:0008718">
    <property type="term" value="F:D-amino-acid dehydrogenase activity"/>
    <property type="evidence" value="ECO:0007669"/>
    <property type="project" value="UniProtKB-UniRule"/>
</dbReference>
<dbReference type="GO" id="GO:0055130">
    <property type="term" value="P:D-alanine catabolic process"/>
    <property type="evidence" value="ECO:0007669"/>
    <property type="project" value="UniProtKB-UniPathway"/>
</dbReference>
<dbReference type="FunFam" id="3.50.50.60:FF:000020">
    <property type="entry name" value="D-amino acid dehydrogenase"/>
    <property type="match status" value="1"/>
</dbReference>
<dbReference type="Gene3D" id="3.30.9.10">
    <property type="entry name" value="D-Amino Acid Oxidase, subunit A, domain 2"/>
    <property type="match status" value="1"/>
</dbReference>
<dbReference type="Gene3D" id="3.50.50.60">
    <property type="entry name" value="FAD/NAD(P)-binding domain"/>
    <property type="match status" value="2"/>
</dbReference>
<dbReference type="HAMAP" id="MF_01202">
    <property type="entry name" value="DadA"/>
    <property type="match status" value="1"/>
</dbReference>
<dbReference type="InterPro" id="IPR023080">
    <property type="entry name" value="DadA"/>
</dbReference>
<dbReference type="InterPro" id="IPR006076">
    <property type="entry name" value="FAD-dep_OxRdtase"/>
</dbReference>
<dbReference type="InterPro" id="IPR036188">
    <property type="entry name" value="FAD/NAD-bd_sf"/>
</dbReference>
<dbReference type="NCBIfam" id="NF001933">
    <property type="entry name" value="PRK00711.1"/>
    <property type="match status" value="1"/>
</dbReference>
<dbReference type="PANTHER" id="PTHR13847:SF280">
    <property type="entry name" value="D-AMINO ACID DEHYDROGENASE"/>
    <property type="match status" value="1"/>
</dbReference>
<dbReference type="PANTHER" id="PTHR13847">
    <property type="entry name" value="SARCOSINE DEHYDROGENASE-RELATED"/>
    <property type="match status" value="1"/>
</dbReference>
<dbReference type="Pfam" id="PF01266">
    <property type="entry name" value="DAO"/>
    <property type="match status" value="1"/>
</dbReference>
<dbReference type="SUPFAM" id="SSF54373">
    <property type="entry name" value="FAD-linked reductases, C-terminal domain"/>
    <property type="match status" value="1"/>
</dbReference>
<dbReference type="SUPFAM" id="SSF51905">
    <property type="entry name" value="FAD/NAD(P)-binding domain"/>
    <property type="match status" value="1"/>
</dbReference>
<feature type="chain" id="PRO_1000138667" description="D-amino acid dehydrogenase">
    <location>
        <begin position="1"/>
        <end position="432"/>
    </location>
</feature>
<feature type="binding site" evidence="1">
    <location>
        <begin position="3"/>
        <end position="17"/>
    </location>
    <ligand>
        <name>FAD</name>
        <dbReference type="ChEBI" id="CHEBI:57692"/>
    </ligand>
</feature>
<accession>B4SUJ5</accession>
<organism>
    <name type="scientific">Salmonella newport (strain SL254)</name>
    <dbReference type="NCBI Taxonomy" id="423368"/>
    <lineage>
        <taxon>Bacteria</taxon>
        <taxon>Pseudomonadati</taxon>
        <taxon>Pseudomonadota</taxon>
        <taxon>Gammaproteobacteria</taxon>
        <taxon>Enterobacterales</taxon>
        <taxon>Enterobacteriaceae</taxon>
        <taxon>Salmonella</taxon>
    </lineage>
</organism>
<comment type="function">
    <text evidence="1">Oxidative deamination of D-amino acids.</text>
</comment>
<comment type="catalytic activity">
    <reaction evidence="1">
        <text>a D-alpha-amino acid + A + H2O = a 2-oxocarboxylate + AH2 + NH4(+)</text>
        <dbReference type="Rhea" id="RHEA:18125"/>
        <dbReference type="ChEBI" id="CHEBI:13193"/>
        <dbReference type="ChEBI" id="CHEBI:15377"/>
        <dbReference type="ChEBI" id="CHEBI:17499"/>
        <dbReference type="ChEBI" id="CHEBI:28938"/>
        <dbReference type="ChEBI" id="CHEBI:35179"/>
        <dbReference type="ChEBI" id="CHEBI:59871"/>
    </reaction>
</comment>
<comment type="cofactor">
    <cofactor evidence="1">
        <name>FAD</name>
        <dbReference type="ChEBI" id="CHEBI:57692"/>
    </cofactor>
</comment>
<comment type="pathway">
    <text>Amino-acid degradation; D-alanine degradation; NH(3) and pyruvate from D-alanine: step 1/1.</text>
</comment>
<comment type="similarity">
    <text evidence="1">Belongs to the DadA oxidoreductase family.</text>
</comment>
<protein>
    <recommendedName>
        <fullName evidence="1">D-amino acid dehydrogenase</fullName>
        <ecNumber evidence="1">1.4.99.-</ecNumber>
    </recommendedName>
</protein>
<gene>
    <name evidence="1" type="primary">dadA</name>
    <name type="ordered locus">SNSL254_A1941</name>
</gene>
<proteinExistence type="inferred from homology"/>
<reference key="1">
    <citation type="journal article" date="2011" name="J. Bacteriol.">
        <title>Comparative genomics of 28 Salmonella enterica isolates: evidence for CRISPR-mediated adaptive sublineage evolution.</title>
        <authorList>
            <person name="Fricke W.F."/>
            <person name="Mammel M.K."/>
            <person name="McDermott P.F."/>
            <person name="Tartera C."/>
            <person name="White D.G."/>
            <person name="Leclerc J.E."/>
            <person name="Ravel J."/>
            <person name="Cebula T.A."/>
        </authorList>
    </citation>
    <scope>NUCLEOTIDE SEQUENCE [LARGE SCALE GENOMIC DNA]</scope>
    <source>
        <strain>SL254</strain>
    </source>
</reference>
<name>DADA_SALNS</name>
<sequence>MRVVILGSGVVGVTSAWYLSQAGHDVTVIDRESGPAQETSAANAGQISPGYAAPWAAPGVPLKAIKWMFQRHAPLAVRLDGTPFQLKWMWQMLRNCDTRHYMENKGRMVRLAEYSRDCLKTLRAATGIEYEGRQGGTLQLFRTAQQYENATRDIAVLEDAGVPYQLLESSRLAEVEPALAEVAHKLTGGLRLPNDETGDCQLFTQRLARMAEQAGVTFRFNTPVEKLLYENDQIYGVKCADEIIKADAYVMAFGSYSTAMLKGIVDIPVYPLKGYSLTIPIVEPDGAPVSTILDETYKIAITRFDKRIRVGGMAEIVGFNTDLLQPRRETLEMVVRDLFPRGGHIEQATFWTGLRPMTPDGTPVVGRTRYKNLWLNTGHGTLGWTMACGSGQLLSDILSGRTPAIPYDDLSVARYRSDFTPTPPQRLHSAHN</sequence>